<feature type="chain" id="PRO_0000405234" description="Protein argonaute">
    <location>
        <begin position="1"/>
        <end position="899"/>
    </location>
</feature>
<feature type="domain" description="PAZ" evidence="3">
    <location>
        <begin position="229"/>
        <end position="313"/>
    </location>
</feature>
<feature type="domain" description="Piwi" evidence="4">
    <location>
        <begin position="555"/>
        <end position="878"/>
    </location>
</feature>
<feature type="region of interest" description="Disordered" evidence="5">
    <location>
        <begin position="107"/>
        <end position="129"/>
    </location>
</feature>
<feature type="compositionally biased region" description="Gly residues" evidence="5">
    <location>
        <begin position="116"/>
        <end position="125"/>
    </location>
</feature>
<proteinExistence type="inferred from homology"/>
<gene>
    <name evidence="1" type="primary">Ago</name>
    <name type="ORF">GL50581_2062</name>
</gene>
<comment type="function">
    <text evidence="1">Plays an essential role in growth and, with Dicer, also involved in microRNA (miRNA)-mediated translational repression. The RNA interference pathway is implicated in antigenic variation having a role in regulation of variant-specific surface protein (VSP)-coding gene expression. Several VSP genes are transcribed but only transcripts encoding the VSP to be expressed accumulate. Antisense RNAs corresponding to the silenced VSP genes are detected (By similarity).</text>
</comment>
<comment type="subunit">
    <text evidence="1">Interacts with miR2. Highly specific binding to the mRNA m7G-cap. May be a component of the RNA-induced silencing complex (RISC), a sequence-specific, multicomponent nuclease that destroys or silences messenger RNAs homologous to the silencing trigger (By similarity).</text>
</comment>
<comment type="subcellular location">
    <subcellularLocation>
        <location evidence="1">Cytoplasm</location>
    </subcellularLocation>
</comment>
<comment type="domain">
    <text evidence="1">PAZ domain is absent, but Ago is capable of binding small RNAs in the same way as the other Argonaute proteins.</text>
</comment>
<comment type="similarity">
    <text evidence="2">Belongs to the argonaute family. Ago subfamily.</text>
</comment>
<accession>C6LTG5</accession>
<dbReference type="EMBL" id="ACGJ01002264">
    <property type="protein sequence ID" value="EET00696.1"/>
    <property type="molecule type" value="Genomic_DNA"/>
</dbReference>
<dbReference type="SMR" id="C6LTG5"/>
<dbReference type="EnsemblProtists" id="EET00696">
    <property type="protein sequence ID" value="EET00696"/>
    <property type="gene ID" value="GL50581_2062"/>
</dbReference>
<dbReference type="VEuPathDB" id="GiardiaDB:GL50581_2062"/>
<dbReference type="OMA" id="DICWIPG"/>
<dbReference type="OrthoDB" id="10252740at2759"/>
<dbReference type="Proteomes" id="UP000002488">
    <property type="component" value="Unassembled WGS sequence"/>
</dbReference>
<dbReference type="GO" id="GO:0005737">
    <property type="term" value="C:cytoplasm"/>
    <property type="evidence" value="ECO:0007669"/>
    <property type="project" value="UniProtKB-SubCell"/>
</dbReference>
<dbReference type="GO" id="GO:0003723">
    <property type="term" value="F:RNA binding"/>
    <property type="evidence" value="ECO:0007669"/>
    <property type="project" value="UniProtKB-KW"/>
</dbReference>
<dbReference type="GO" id="GO:0030154">
    <property type="term" value="P:cell differentiation"/>
    <property type="evidence" value="ECO:0007669"/>
    <property type="project" value="UniProtKB-KW"/>
</dbReference>
<dbReference type="GO" id="GO:0006417">
    <property type="term" value="P:regulation of translation"/>
    <property type="evidence" value="ECO:0007669"/>
    <property type="project" value="UniProtKB-KW"/>
</dbReference>
<dbReference type="GO" id="GO:0031047">
    <property type="term" value="P:regulatory ncRNA-mediated gene silencing"/>
    <property type="evidence" value="ECO:0007669"/>
    <property type="project" value="UniProtKB-KW"/>
</dbReference>
<dbReference type="Gene3D" id="3.40.50.2300">
    <property type="match status" value="1"/>
</dbReference>
<dbReference type="Gene3D" id="2.170.260.10">
    <property type="entry name" value="paz domain"/>
    <property type="match status" value="1"/>
</dbReference>
<dbReference type="Gene3D" id="3.30.420.10">
    <property type="entry name" value="Ribonuclease H-like superfamily/Ribonuclease H"/>
    <property type="match status" value="1"/>
</dbReference>
<dbReference type="InterPro" id="IPR003100">
    <property type="entry name" value="PAZ_dom"/>
</dbReference>
<dbReference type="InterPro" id="IPR003165">
    <property type="entry name" value="Piwi"/>
</dbReference>
<dbReference type="InterPro" id="IPR012337">
    <property type="entry name" value="RNaseH-like_sf"/>
</dbReference>
<dbReference type="InterPro" id="IPR036397">
    <property type="entry name" value="RNaseH_sf"/>
</dbReference>
<dbReference type="PANTHER" id="PTHR22891">
    <property type="entry name" value="EUKARYOTIC TRANSLATION INITIATION FACTOR 2C"/>
    <property type="match status" value="1"/>
</dbReference>
<dbReference type="Pfam" id="PF02171">
    <property type="entry name" value="Piwi"/>
    <property type="match status" value="1"/>
</dbReference>
<dbReference type="SMART" id="SM00950">
    <property type="entry name" value="Piwi"/>
    <property type="match status" value="1"/>
</dbReference>
<dbReference type="SUPFAM" id="SSF53098">
    <property type="entry name" value="Ribonuclease H-like"/>
    <property type="match status" value="1"/>
</dbReference>
<dbReference type="PROSITE" id="PS50821">
    <property type="entry name" value="PAZ"/>
    <property type="match status" value="1"/>
</dbReference>
<dbReference type="PROSITE" id="PS50822">
    <property type="entry name" value="PIWI"/>
    <property type="match status" value="1"/>
</dbReference>
<keyword id="KW-0963">Cytoplasm</keyword>
<keyword id="KW-0217">Developmental protein</keyword>
<keyword id="KW-0221">Differentiation</keyword>
<keyword id="KW-0694">RNA-binding</keyword>
<keyword id="KW-0943">RNA-mediated gene silencing</keyword>
<keyword id="KW-0810">Translation regulation</keyword>
<reference evidence="6" key="1">
    <citation type="journal article" date="2009" name="PLoS Pathog.">
        <title>Draft genome sequencing of giardia intestinalis assemblage B isolate GS: is human giardiasis caused by two different species?</title>
        <authorList>
            <person name="Franzen O."/>
            <person name="Jerlstrom-Hultqvist J."/>
            <person name="Castro E."/>
            <person name="Sherwood E."/>
            <person name="Ankarklev J."/>
            <person name="Reiner D.S."/>
            <person name="Palm D."/>
            <person name="Andersson J.O."/>
            <person name="Andersson B."/>
            <person name="Svard S.G."/>
        </authorList>
    </citation>
    <scope>NUCLEOTIDE SEQUENCE [LARGE SCALE GENOMIC DNA]</scope>
    <source>
        <strain evidence="6">ATCC 50581 / GS clone H7</strain>
    </source>
</reference>
<protein>
    <recommendedName>
        <fullName evidence="1">Protein argonaute</fullName>
    </recommendedName>
</protein>
<name>AGO_GIAIB</name>
<evidence type="ECO:0000250" key="1">
    <source>
        <dbReference type="UniProtKB" id="Q86QW7"/>
    </source>
</evidence>
<evidence type="ECO:0000255" key="2"/>
<evidence type="ECO:0000255" key="3">
    <source>
        <dbReference type="PROSITE-ProRule" id="PRU00142"/>
    </source>
</evidence>
<evidence type="ECO:0000255" key="4">
    <source>
        <dbReference type="PROSITE-ProRule" id="PRU00150"/>
    </source>
</evidence>
<evidence type="ECO:0000256" key="5">
    <source>
        <dbReference type="SAM" id="MobiDB-lite"/>
    </source>
</evidence>
<evidence type="ECO:0000312" key="6">
    <source>
        <dbReference type="EMBL" id="EET00696.1"/>
    </source>
</evidence>
<organism>
    <name type="scientific">Giardia intestinalis (strain ATCC 50581 / GS clone H7)</name>
    <name type="common">Giardia lamblia</name>
    <dbReference type="NCBI Taxonomy" id="598745"/>
    <lineage>
        <taxon>Eukaryota</taxon>
        <taxon>Metamonada</taxon>
        <taxon>Diplomonadida</taxon>
        <taxon>Hexamitidae</taxon>
        <taxon>Giardiinae</taxon>
        <taxon>Giardia</taxon>
    </lineage>
</organism>
<sequence>MTTDIVTSRINFYPYTVLPSAKPVYQYDLSIQVSTQGYNLDNADSYRALEKFCEQQDTALGNDPARSLFYSLIVDFPSSDSRPISSFYSQTDLGSRPVTHTVEFLSTQKPKRRGGRAGGMRGNRGGPSTTSVQALVKVTRVRQMDPLDLMSMKTLLNILLRRTFESSLGMLNIRSGFYDLNRTSTHNIQVDGRGFDICWIPGFRLTTATLYGKLGLQVLPETTKVRSKSMCELLNENRGSLHPNALAAITVMAMHNGRVFRIHSIVRGQSVVSPLAEGSDTDYFTYYSAKYKDKIDSAALSLLKQDDYCNSVLQRDKFILKLTPLKKTHNGKVVRSCNVPSSLCIIISDNEIAPYGVSKLSTNKTAVALSTMSPDALLEKATEFANQLIDNAELQSVLGDYGFRFTSQPLELDTFVCKPPKLMMDTLSRELTVEDDSGGVFRSLIQSPGVSSIYYANNGQPAVGMPHWALMVPRYLKNDYARRLKQELTQRIRSLAGATASTVEEPLLIAVDVNEQRRDMYRIEPYKDAFESLLVKLNTQYPDTKNSELISRIQLVVVVIPGPKQYSGGLYKEVKRFYTDKGIVTQCLLTPRLSRDGPEWYDQAILNGLCQQIYAKAGGAVWAPALPKDNAYSTSTMLCALDVSRPKKTVGRPTEVPASTAGFISTYEGSFEYIYSQKKNLMPNRLNQGGEVQQQTLMKTFIKNSCEVYSAFNSSLPDRIVIFRDGVSDGQISTVLETEINSLYEYLCQRYREANRPMCDLKVIVAQKTCAMRLAAVSNTDLRPGFYILNHSPDNKQKGSEFIMASQAIVHGTTPKPIRYKLIFDSTEASMDNSSFKQLIELTNTMAYGYVNWPQAISLPHILHMAHLLSKFCGEILGNGRDLLESQAIFGLQYRPFFI</sequence>